<feature type="chain" id="PRO_0000082175" description="ATP synthase F(0) complex subunit a">
    <location>
        <begin position="1"/>
        <end position="226"/>
    </location>
</feature>
<feature type="transmembrane region" description="Helical" evidence="2">
    <location>
        <begin position="14"/>
        <end position="34"/>
    </location>
</feature>
<feature type="transmembrane region" description="Helical" evidence="2">
    <location>
        <begin position="68"/>
        <end position="88"/>
    </location>
</feature>
<feature type="transmembrane region" description="Helical" evidence="2">
    <location>
        <begin position="97"/>
        <end position="117"/>
    </location>
</feature>
<feature type="transmembrane region" description="Helical" evidence="2">
    <location>
        <begin position="138"/>
        <end position="158"/>
    </location>
</feature>
<feature type="transmembrane region" description="Helical" evidence="2">
    <location>
        <begin position="164"/>
        <end position="184"/>
    </location>
</feature>
<feature type="transmembrane region" description="Helical" evidence="2">
    <location>
        <begin position="193"/>
        <end position="213"/>
    </location>
</feature>
<organism>
    <name type="scientific">Tachyglossus aculeatus aculeatus</name>
    <name type="common">Southeast Australian short-beaked echidna</name>
    <dbReference type="NCBI Taxonomy" id="49271"/>
    <lineage>
        <taxon>Eukaryota</taxon>
        <taxon>Metazoa</taxon>
        <taxon>Chordata</taxon>
        <taxon>Craniata</taxon>
        <taxon>Vertebrata</taxon>
        <taxon>Euteleostomi</taxon>
        <taxon>Mammalia</taxon>
        <taxon>Monotremata</taxon>
        <taxon>Tachyglossidae</taxon>
        <taxon>Tachyglossus</taxon>
    </lineage>
</organism>
<proteinExistence type="inferred from homology"/>
<keyword id="KW-0066">ATP synthesis</keyword>
<keyword id="KW-0138">CF(0)</keyword>
<keyword id="KW-0375">Hydrogen ion transport</keyword>
<keyword id="KW-0406">Ion transport</keyword>
<keyword id="KW-0472">Membrane</keyword>
<keyword id="KW-0496">Mitochondrion</keyword>
<keyword id="KW-0999">Mitochondrion inner membrane</keyword>
<keyword id="KW-0812">Transmembrane</keyword>
<keyword id="KW-1133">Transmembrane helix</keyword>
<keyword id="KW-0813">Transport</keyword>
<dbReference type="EMBL" id="AJ303116">
    <property type="protein sequence ID" value="CAC88015.1"/>
    <property type="molecule type" value="Genomic_DNA"/>
</dbReference>
<dbReference type="RefSeq" id="NP_542235.1">
    <property type="nucleotide sequence ID" value="NC_003321.1"/>
</dbReference>
<dbReference type="SMR" id="Q8W9G8"/>
<dbReference type="GeneID" id="804505"/>
<dbReference type="CTD" id="4508"/>
<dbReference type="GO" id="GO:0005743">
    <property type="term" value="C:mitochondrial inner membrane"/>
    <property type="evidence" value="ECO:0007669"/>
    <property type="project" value="UniProtKB-SubCell"/>
</dbReference>
<dbReference type="GO" id="GO:0045259">
    <property type="term" value="C:proton-transporting ATP synthase complex"/>
    <property type="evidence" value="ECO:0000250"/>
    <property type="project" value="UniProtKB"/>
</dbReference>
<dbReference type="GO" id="GO:0015252">
    <property type="term" value="F:proton channel activity"/>
    <property type="evidence" value="ECO:0000250"/>
    <property type="project" value="UniProtKB"/>
</dbReference>
<dbReference type="GO" id="GO:0046933">
    <property type="term" value="F:proton-transporting ATP synthase activity, rotational mechanism"/>
    <property type="evidence" value="ECO:0007669"/>
    <property type="project" value="TreeGrafter"/>
</dbReference>
<dbReference type="GO" id="GO:0015986">
    <property type="term" value="P:proton motive force-driven ATP synthesis"/>
    <property type="evidence" value="ECO:0000250"/>
    <property type="project" value="UniProtKB"/>
</dbReference>
<dbReference type="GO" id="GO:1902600">
    <property type="term" value="P:proton transmembrane transport"/>
    <property type="evidence" value="ECO:0000250"/>
    <property type="project" value="UniProtKB"/>
</dbReference>
<dbReference type="CDD" id="cd00310">
    <property type="entry name" value="ATP-synt_Fo_a_6"/>
    <property type="match status" value="1"/>
</dbReference>
<dbReference type="FunFam" id="1.20.120.220:FF:000004">
    <property type="entry name" value="ATP synthase subunit a"/>
    <property type="match status" value="1"/>
</dbReference>
<dbReference type="Gene3D" id="1.20.120.220">
    <property type="entry name" value="ATP synthase, F0 complex, subunit A"/>
    <property type="match status" value="1"/>
</dbReference>
<dbReference type="InterPro" id="IPR000568">
    <property type="entry name" value="ATP_synth_F0_asu"/>
</dbReference>
<dbReference type="InterPro" id="IPR023011">
    <property type="entry name" value="ATP_synth_F0_asu_AS"/>
</dbReference>
<dbReference type="InterPro" id="IPR045083">
    <property type="entry name" value="ATP_synth_F0_asu_bact/mt"/>
</dbReference>
<dbReference type="InterPro" id="IPR035908">
    <property type="entry name" value="F0_ATP_A_sf"/>
</dbReference>
<dbReference type="NCBIfam" id="TIGR01131">
    <property type="entry name" value="ATP_synt_6_or_A"/>
    <property type="match status" value="1"/>
</dbReference>
<dbReference type="PANTHER" id="PTHR11410">
    <property type="entry name" value="ATP SYNTHASE SUBUNIT A"/>
    <property type="match status" value="1"/>
</dbReference>
<dbReference type="PANTHER" id="PTHR11410:SF0">
    <property type="entry name" value="ATP SYNTHASE SUBUNIT A"/>
    <property type="match status" value="1"/>
</dbReference>
<dbReference type="Pfam" id="PF00119">
    <property type="entry name" value="ATP-synt_A"/>
    <property type="match status" value="1"/>
</dbReference>
<dbReference type="PRINTS" id="PR00123">
    <property type="entry name" value="ATPASEA"/>
</dbReference>
<dbReference type="SUPFAM" id="SSF81336">
    <property type="entry name" value="F1F0 ATP synthase subunit A"/>
    <property type="match status" value="1"/>
</dbReference>
<dbReference type="PROSITE" id="PS00449">
    <property type="entry name" value="ATPASE_A"/>
    <property type="match status" value="1"/>
</dbReference>
<accession>Q8W9G8</accession>
<gene>
    <name evidence="1" type="primary">MT-ATP6</name>
    <name type="synonym">ATP6</name>
    <name type="synonym">ATPASE6</name>
    <name type="synonym">MTATP6</name>
</gene>
<sequence length="226" mass="25110">MNENLFASFITPTILGISILPLIMIFPCLLFSAPNRWMPNRLVALQLWLVRMVTKQMMSMHNKQGRMWTLMLITLIMFIASTNLLGLLPYTFTPTTQLSMNMGMAVPLWLGTVLMGFRNKPKSSLAHFLPQGTPTPLIPMLIIIETISLFIQPVALAVRLTANITAGHLLIHLIGSATLALSSISLTVSTITFTILFLLTILEIAVALIQAYVFTLLVSLYLHDNT</sequence>
<protein>
    <recommendedName>
        <fullName evidence="1">ATP synthase F(0) complex subunit a</fullName>
    </recommendedName>
    <alternativeName>
        <fullName>F-ATPase protein 6</fullName>
    </alternativeName>
    <alternativeName>
        <fullName evidence="1">Proton-conducting channel, ATP synthase F(0) complex subunit a</fullName>
    </alternativeName>
</protein>
<reference key="1">
    <citation type="journal article" date="2002" name="J. Mol. Evol.">
        <title>Phylogenetic analysis of 18S rRNA and the mitochondrial genomes of the wombat, Vombatus ursinus, and the spiny anteater, Tachyglossus aculeatus: increased support for the Marsupionta hypothesis.</title>
        <authorList>
            <person name="Janke A."/>
            <person name="Magnell O."/>
            <person name="Wieczorek G."/>
            <person name="Westerman M."/>
            <person name="Arnason U."/>
        </authorList>
    </citation>
    <scope>NUCLEOTIDE SEQUENCE [GENOMIC DNA]</scope>
    <source>
        <tissue>Liver</tissue>
    </source>
</reference>
<geneLocation type="mitochondrion"/>
<evidence type="ECO:0000250" key="1">
    <source>
        <dbReference type="UniProtKB" id="P00846"/>
    </source>
</evidence>
<evidence type="ECO:0000255" key="2"/>
<evidence type="ECO:0000305" key="3"/>
<comment type="function">
    <text evidence="1">Subunit a, of the mitochondrial membrane ATP synthase complex (F(1)F(0) ATP synthase or Complex V) that produces ATP from ADP in the presence of a proton gradient across the membrane which is generated by electron transport complexes of the respiratory chain. ATP synthase complex consist of a soluble F(1) head domain - the catalytic core - and a membrane F(1) domain - the membrane proton channel. These two domains are linked by a central stalk rotating inside the F(1) region and a stationary peripheral stalk. During catalysis, ATP synthesis in the catalytic domain of F(1) is coupled via a rotary mechanism of the central stalk subunits to proton translocation. With the subunit c (ATP5MC1), forms the proton-conducting channel in the F(0) domain, that contains two crucial half-channels (inlet and outlet) that facilitate proton movement from the mitochondrial intermembrane space (IMS) into the matrix. Protons are taken up via the inlet half-channel and released through the outlet half-channel, following a Grotthuss mechanism.</text>
</comment>
<comment type="catalytic activity">
    <reaction evidence="1">
        <text>H(+)(in) = H(+)(out)</text>
        <dbReference type="Rhea" id="RHEA:34979"/>
        <dbReference type="ChEBI" id="CHEBI:15378"/>
    </reaction>
</comment>
<comment type="subunit">
    <text evidence="1">Component of the ATP synthase complex composed at least of ATP5F1A/subunit alpha, ATP5F1B/subunit beta, ATP5MC1/subunit c (homooctomer), MT-ATP6/subunit a, MT-ATP8/subunit 8, ATP5ME/subunit e, ATP5MF/subunit f, ATP5MG/subunit g, ATP5MK/subunit k, ATP5MJ/subunit j, ATP5F1C/subunit gamma, ATP5F1D/subunit delta, ATP5F1E/subunit epsilon, ATP5PF/subunit F6, ATP5PB/subunit b, ATP5PD/subunit d, ATP5PO/subunit OSCP. ATP synthase complex consists of a soluble F(1) head domain (subunits alpha(3) and beta(3)) - the catalytic core - and a membrane F(0) domain - the membrane proton channel (subunits c, a, 8, e, f, g, k and j). These two domains are linked by a central stalk (subunits gamma, delta, and epsilon) rotating inside the F1 region and a stationary peripheral stalk (subunits F6, b, d, and OSCP). Interacts with DNAJC30; interaction is direct.</text>
</comment>
<comment type="subcellular location">
    <subcellularLocation>
        <location>Mitochondrion inner membrane</location>
        <topology>Multi-pass membrane protein</topology>
    </subcellularLocation>
</comment>
<comment type="similarity">
    <text evidence="3">Belongs to the ATPase A chain family.</text>
</comment>
<name>ATP6_TACAC</name>